<proteinExistence type="inferred from homology"/>
<reference key="1">
    <citation type="journal article" date="2003" name="Proc. Natl. Acad. Sci. U.S.A.">
        <title>Complete genome sequence of Lactobacillus plantarum WCFS1.</title>
        <authorList>
            <person name="Kleerebezem M."/>
            <person name="Boekhorst J."/>
            <person name="van Kranenburg R."/>
            <person name="Molenaar D."/>
            <person name="Kuipers O.P."/>
            <person name="Leer R."/>
            <person name="Tarchini R."/>
            <person name="Peters S.A."/>
            <person name="Sandbrink H.M."/>
            <person name="Fiers M.W.E.J."/>
            <person name="Stiekema W."/>
            <person name="Klein Lankhorst R.M."/>
            <person name="Bron P.A."/>
            <person name="Hoffer S.M."/>
            <person name="Nierop Groot M.N."/>
            <person name="Kerkhoven R."/>
            <person name="De Vries M."/>
            <person name="Ursing B."/>
            <person name="De Vos W.M."/>
            <person name="Siezen R.J."/>
        </authorList>
    </citation>
    <scope>NUCLEOTIDE SEQUENCE [LARGE SCALE GENOMIC DNA]</scope>
    <source>
        <strain>ATCC BAA-793 / NCIMB 8826 / WCFS1</strain>
    </source>
</reference>
<reference key="2">
    <citation type="journal article" date="2012" name="J. Bacteriol.">
        <title>Complete resequencing and reannotation of the Lactobacillus plantarum WCFS1 genome.</title>
        <authorList>
            <person name="Siezen R.J."/>
            <person name="Francke C."/>
            <person name="Renckens B."/>
            <person name="Boekhorst J."/>
            <person name="Wels M."/>
            <person name="Kleerebezem M."/>
            <person name="van Hijum S.A."/>
        </authorList>
    </citation>
    <scope>NUCLEOTIDE SEQUENCE [LARGE SCALE GENOMIC DNA]</scope>
    <scope>GENOME REANNOTATION</scope>
    <source>
        <strain>ATCC BAA-793 / NCIMB 8826 / WCFS1</strain>
    </source>
</reference>
<gene>
    <name evidence="1" type="primary">aroA</name>
    <name type="synonym">aroE</name>
    <name type="ordered locus">lp_2035</name>
</gene>
<name>AROA_LACPL</name>
<feature type="chain" id="PRO_0000088265" description="3-phosphoshikimate 1-carboxyvinyltransferase">
    <location>
        <begin position="1"/>
        <end position="432"/>
    </location>
</feature>
<feature type="active site" description="Proton acceptor" evidence="1">
    <location>
        <position position="315"/>
    </location>
</feature>
<feature type="binding site" evidence="1">
    <location>
        <position position="23"/>
    </location>
    <ligand>
        <name>3-phosphoshikimate</name>
        <dbReference type="ChEBI" id="CHEBI:145989"/>
    </ligand>
</feature>
<feature type="binding site" evidence="1">
    <location>
        <position position="23"/>
    </location>
    <ligand>
        <name>phosphoenolpyruvate</name>
        <dbReference type="ChEBI" id="CHEBI:58702"/>
    </ligand>
</feature>
<feature type="binding site" evidence="1">
    <location>
        <position position="24"/>
    </location>
    <ligand>
        <name>3-phosphoshikimate</name>
        <dbReference type="ChEBI" id="CHEBI:145989"/>
    </ligand>
</feature>
<feature type="binding site" evidence="1">
    <location>
        <position position="28"/>
    </location>
    <ligand>
        <name>3-phosphoshikimate</name>
        <dbReference type="ChEBI" id="CHEBI:145989"/>
    </ligand>
</feature>
<feature type="binding site" evidence="1">
    <location>
        <position position="95"/>
    </location>
    <ligand>
        <name>phosphoenolpyruvate</name>
        <dbReference type="ChEBI" id="CHEBI:58702"/>
    </ligand>
</feature>
<feature type="binding site" evidence="1">
    <location>
        <position position="123"/>
    </location>
    <ligand>
        <name>phosphoenolpyruvate</name>
        <dbReference type="ChEBI" id="CHEBI:58702"/>
    </ligand>
</feature>
<feature type="binding site" evidence="1">
    <location>
        <position position="166"/>
    </location>
    <ligand>
        <name>3-phosphoshikimate</name>
        <dbReference type="ChEBI" id="CHEBI:145989"/>
    </ligand>
</feature>
<feature type="binding site" evidence="1">
    <location>
        <position position="168"/>
    </location>
    <ligand>
        <name>3-phosphoshikimate</name>
        <dbReference type="ChEBI" id="CHEBI:145989"/>
    </ligand>
</feature>
<feature type="binding site" evidence="1">
    <location>
        <position position="168"/>
    </location>
    <ligand>
        <name>phosphoenolpyruvate</name>
        <dbReference type="ChEBI" id="CHEBI:58702"/>
    </ligand>
</feature>
<feature type="binding site" evidence="1">
    <location>
        <position position="315"/>
    </location>
    <ligand>
        <name>3-phosphoshikimate</name>
        <dbReference type="ChEBI" id="CHEBI:145989"/>
    </ligand>
</feature>
<feature type="binding site" evidence="1">
    <location>
        <position position="342"/>
    </location>
    <ligand>
        <name>3-phosphoshikimate</name>
        <dbReference type="ChEBI" id="CHEBI:145989"/>
    </ligand>
</feature>
<feature type="binding site" evidence="1">
    <location>
        <position position="346"/>
    </location>
    <ligand>
        <name>phosphoenolpyruvate</name>
        <dbReference type="ChEBI" id="CHEBI:58702"/>
    </ligand>
</feature>
<feature type="binding site" evidence="1">
    <location>
        <position position="390"/>
    </location>
    <ligand>
        <name>phosphoenolpyruvate</name>
        <dbReference type="ChEBI" id="CHEBI:58702"/>
    </ligand>
</feature>
<evidence type="ECO:0000255" key="1">
    <source>
        <dbReference type="HAMAP-Rule" id="MF_00210"/>
    </source>
</evidence>
<sequence length="432" mass="46021">MIKKLSIQPASGLQGDLSVPGDKSVSHRGLILGAISQGTTTLHHFLPAADCLSTLTALQKLGVPIKRVDTTVTISGRGLRGLTQPQQPLDMGNAGTATRLLTGLLAGQPFETTLVGDTSLSQRPMERVRQPLQAMGAQVQLTAGHLPMTITGRTLHGSRTEMQVASAQVKSALILAALQADQASTIIEKLPTRDHTERLLQQFGGQIETAPDQRTITVQPQPALVGQSLTIPGDFSSAAFFVTAATIIPNSHVRLTNVGLNPTRTGFLNILRRMGGQVTVDHEHRMGEPVGTLDVRFAQLHPVQVTATEIPAVIDELPLVALLAATANGISTISGAAELRVKETDRIATIVTELQKLGVRITSQPDGFVIDGRKSWRQPTEPLASHGDHRIGMMMAIAALRLAAPAELESAEAVNISYPTFFEDLARLSQGV</sequence>
<comment type="function">
    <text evidence="1">Catalyzes the transfer of the enolpyruvyl moiety of phosphoenolpyruvate (PEP) to the 5-hydroxyl of shikimate-3-phosphate (S3P) to produce enolpyruvyl shikimate-3-phosphate and inorganic phosphate.</text>
</comment>
<comment type="catalytic activity">
    <reaction evidence="1">
        <text>3-phosphoshikimate + phosphoenolpyruvate = 5-O-(1-carboxyvinyl)-3-phosphoshikimate + phosphate</text>
        <dbReference type="Rhea" id="RHEA:21256"/>
        <dbReference type="ChEBI" id="CHEBI:43474"/>
        <dbReference type="ChEBI" id="CHEBI:57701"/>
        <dbReference type="ChEBI" id="CHEBI:58702"/>
        <dbReference type="ChEBI" id="CHEBI:145989"/>
        <dbReference type="EC" id="2.5.1.19"/>
    </reaction>
    <physiologicalReaction direction="left-to-right" evidence="1">
        <dbReference type="Rhea" id="RHEA:21257"/>
    </physiologicalReaction>
</comment>
<comment type="pathway">
    <text evidence="1">Metabolic intermediate biosynthesis; chorismate biosynthesis; chorismate from D-erythrose 4-phosphate and phosphoenolpyruvate: step 6/7.</text>
</comment>
<comment type="subunit">
    <text evidence="1">Monomer.</text>
</comment>
<comment type="subcellular location">
    <subcellularLocation>
        <location evidence="1">Cytoplasm</location>
    </subcellularLocation>
</comment>
<comment type="similarity">
    <text evidence="1">Belongs to the EPSP synthase family.</text>
</comment>
<protein>
    <recommendedName>
        <fullName evidence="1">3-phosphoshikimate 1-carboxyvinyltransferase</fullName>
        <ecNumber evidence="1">2.5.1.19</ecNumber>
    </recommendedName>
    <alternativeName>
        <fullName evidence="1">5-enolpyruvylshikimate-3-phosphate synthase</fullName>
        <shortName evidence="1">EPSP synthase</shortName>
        <shortName evidence="1">EPSPS</shortName>
    </alternativeName>
</protein>
<accession>Q88VL2</accession>
<accession>F9UPZ2</accession>
<dbReference type="EC" id="2.5.1.19" evidence="1"/>
<dbReference type="EMBL" id="AL935263">
    <property type="protein sequence ID" value="CCC79281.1"/>
    <property type="molecule type" value="Genomic_DNA"/>
</dbReference>
<dbReference type="RefSeq" id="WP_003644491.1">
    <property type="nucleotide sequence ID" value="NC_004567.2"/>
</dbReference>
<dbReference type="RefSeq" id="YP_004889795.1">
    <property type="nucleotide sequence ID" value="NC_004567.2"/>
</dbReference>
<dbReference type="SMR" id="Q88VL2"/>
<dbReference type="STRING" id="220668.lp_2035"/>
<dbReference type="EnsemblBacteria" id="CCC79281">
    <property type="protein sequence ID" value="CCC79281"/>
    <property type="gene ID" value="lp_2035"/>
</dbReference>
<dbReference type="KEGG" id="lpl:lp_2035"/>
<dbReference type="PATRIC" id="fig|220668.9.peg.1720"/>
<dbReference type="eggNOG" id="COG0128">
    <property type="taxonomic scope" value="Bacteria"/>
</dbReference>
<dbReference type="HOGENOM" id="CLU_024321_0_1_9"/>
<dbReference type="OrthoDB" id="9809920at2"/>
<dbReference type="PhylomeDB" id="Q88VL2"/>
<dbReference type="UniPathway" id="UPA00053">
    <property type="reaction ID" value="UER00089"/>
</dbReference>
<dbReference type="Proteomes" id="UP000000432">
    <property type="component" value="Chromosome"/>
</dbReference>
<dbReference type="GO" id="GO:0005737">
    <property type="term" value="C:cytoplasm"/>
    <property type="evidence" value="ECO:0007669"/>
    <property type="project" value="UniProtKB-SubCell"/>
</dbReference>
<dbReference type="GO" id="GO:0003866">
    <property type="term" value="F:3-phosphoshikimate 1-carboxyvinyltransferase activity"/>
    <property type="evidence" value="ECO:0007669"/>
    <property type="project" value="UniProtKB-UniRule"/>
</dbReference>
<dbReference type="GO" id="GO:0008652">
    <property type="term" value="P:amino acid biosynthetic process"/>
    <property type="evidence" value="ECO:0007669"/>
    <property type="project" value="UniProtKB-KW"/>
</dbReference>
<dbReference type="GO" id="GO:0009073">
    <property type="term" value="P:aromatic amino acid family biosynthetic process"/>
    <property type="evidence" value="ECO:0007669"/>
    <property type="project" value="UniProtKB-KW"/>
</dbReference>
<dbReference type="GO" id="GO:0009423">
    <property type="term" value="P:chorismate biosynthetic process"/>
    <property type="evidence" value="ECO:0007669"/>
    <property type="project" value="UniProtKB-UniRule"/>
</dbReference>
<dbReference type="CDD" id="cd01556">
    <property type="entry name" value="EPSP_synthase"/>
    <property type="match status" value="1"/>
</dbReference>
<dbReference type="FunFam" id="3.65.10.10:FF:000005">
    <property type="entry name" value="3-phosphoshikimate 1-carboxyvinyltransferase"/>
    <property type="match status" value="1"/>
</dbReference>
<dbReference type="Gene3D" id="3.65.10.10">
    <property type="entry name" value="Enolpyruvate transferase domain"/>
    <property type="match status" value="2"/>
</dbReference>
<dbReference type="HAMAP" id="MF_00210">
    <property type="entry name" value="EPSP_synth"/>
    <property type="match status" value="1"/>
</dbReference>
<dbReference type="InterPro" id="IPR001986">
    <property type="entry name" value="Enolpyruvate_Tfrase_dom"/>
</dbReference>
<dbReference type="InterPro" id="IPR036968">
    <property type="entry name" value="Enolpyruvate_Tfrase_sf"/>
</dbReference>
<dbReference type="InterPro" id="IPR006264">
    <property type="entry name" value="EPSP_synthase"/>
</dbReference>
<dbReference type="InterPro" id="IPR023193">
    <property type="entry name" value="EPSP_synthase_CS"/>
</dbReference>
<dbReference type="InterPro" id="IPR013792">
    <property type="entry name" value="RNA3'P_cycl/enolpyr_Trfase_a/b"/>
</dbReference>
<dbReference type="NCBIfam" id="TIGR01356">
    <property type="entry name" value="aroA"/>
    <property type="match status" value="1"/>
</dbReference>
<dbReference type="PANTHER" id="PTHR21090">
    <property type="entry name" value="AROM/DEHYDROQUINATE SYNTHASE"/>
    <property type="match status" value="1"/>
</dbReference>
<dbReference type="PANTHER" id="PTHR21090:SF5">
    <property type="entry name" value="PENTAFUNCTIONAL AROM POLYPEPTIDE"/>
    <property type="match status" value="1"/>
</dbReference>
<dbReference type="Pfam" id="PF00275">
    <property type="entry name" value="EPSP_synthase"/>
    <property type="match status" value="1"/>
</dbReference>
<dbReference type="PIRSF" id="PIRSF000505">
    <property type="entry name" value="EPSPS"/>
    <property type="match status" value="1"/>
</dbReference>
<dbReference type="SUPFAM" id="SSF55205">
    <property type="entry name" value="EPT/RTPC-like"/>
    <property type="match status" value="1"/>
</dbReference>
<dbReference type="PROSITE" id="PS00104">
    <property type="entry name" value="EPSP_SYNTHASE_1"/>
    <property type="match status" value="1"/>
</dbReference>
<dbReference type="PROSITE" id="PS00885">
    <property type="entry name" value="EPSP_SYNTHASE_2"/>
    <property type="match status" value="1"/>
</dbReference>
<keyword id="KW-0028">Amino-acid biosynthesis</keyword>
<keyword id="KW-0057">Aromatic amino acid biosynthesis</keyword>
<keyword id="KW-0963">Cytoplasm</keyword>
<keyword id="KW-1185">Reference proteome</keyword>
<keyword id="KW-0808">Transferase</keyword>
<organism>
    <name type="scientific">Lactiplantibacillus plantarum (strain ATCC BAA-793 / NCIMB 8826 / WCFS1)</name>
    <name type="common">Lactobacillus plantarum</name>
    <dbReference type="NCBI Taxonomy" id="220668"/>
    <lineage>
        <taxon>Bacteria</taxon>
        <taxon>Bacillati</taxon>
        <taxon>Bacillota</taxon>
        <taxon>Bacilli</taxon>
        <taxon>Lactobacillales</taxon>
        <taxon>Lactobacillaceae</taxon>
        <taxon>Lactiplantibacillus</taxon>
    </lineage>
</organism>